<comment type="function">
    <text evidence="2 3 6">Transcriptional corepressor that binds to a number of transcription factors (PubMed:12642490). Inhibits the transcriptional activation mediated by CTNNB1 and TCF family members in Wnt signaling (By similarity). The effects of full-length TLE family members may be modulated by association with dominant-negative AES (By similarity).</text>
</comment>
<comment type="subunit">
    <text evidence="6 7 8">Interacts with pnx (PubMed:12642490). Interacts with the WRPW motif of ripply1 (PubMed:16326386). Interacts with tcf7l1a (PubMed:25371059). Interacts (via C-terminus) with lbx2 (via N-terminus) (PubMed:25371059).</text>
</comment>
<comment type="subcellular location">
    <subcellularLocation>
        <location evidence="3">Nucleus</location>
    </subcellularLocation>
</comment>
<comment type="tissue specificity">
    <text evidence="9">Expressed ubiquitously during gastrulation. Expressed in the entire presomitic mesoderm, including the tailbud, throughout somitogenesis. Also expressed diffusely within whole somites in young stages. In older stages, expression is restricted to boundaries between somites. Also expressed in a dynamic manner within the neural plate.</text>
</comment>
<comment type="developmental stage">
    <text evidence="9">Expressed both maternally and zygotically. Expression decreases from the mid-blastula stages onwards before increasing again at the start of gastrulation.</text>
</comment>
<comment type="PTM">
    <text evidence="1">Ubiquitinated by XIAP/BIRC4.</text>
</comment>
<comment type="similarity">
    <text evidence="12">Belongs to the WD repeat Groucho/TLE family.</text>
</comment>
<protein>
    <recommendedName>
        <fullName evidence="12">Transducin-like enhancer protein 3-A</fullName>
    </recommendedName>
    <alternativeName>
        <fullName evidence="10">Groucho-related protein grg2</fullName>
    </alternativeName>
    <alternativeName>
        <fullName evidence="11">Protein groucho-2</fullName>
    </alternativeName>
</protein>
<reference key="1">
    <citation type="journal article" date="1997" name="Dev. Genes Evol.">
        <title>Two zebrafish homologues of the Drosophila neurogenic gene groucho and their pattern of transcription during early embryogenesis.</title>
        <authorList>
            <person name="Wuelbeck C."/>
            <person name="Campos-Ortega J.A."/>
        </authorList>
    </citation>
    <scope>NUCLEOTIDE SEQUENCE [MRNA]</scope>
    <scope>TISSUE SPECIFICITY</scope>
    <scope>DEVELOPMENTAL STAGE</scope>
    <source>
        <tissue>Embryo</tissue>
    </source>
</reference>
<reference key="2">
    <citation type="journal article" date="2003" name="Development">
        <title>A homeobox gene, pnx, is involved in the formation of posterior neurons in zebrafish.</title>
        <authorList>
            <person name="Bae Y.B."/>
            <person name="Shimizu T."/>
            <person name="Yabe T."/>
            <person name="Kim C."/>
            <person name="Hirata T."/>
            <person name="Nojima H."/>
            <person name="Muraoka O."/>
            <person name="Hirano T."/>
            <person name="Hibi M."/>
        </authorList>
    </citation>
    <scope>FUNCTION</scope>
    <scope>INTERACTION WITH PNX</scope>
</reference>
<reference key="3">
    <citation type="journal article" date="2005" name="Dev. Cell">
        <title>Groucho-associated transcriptional repressor ripply1 is required for proper transition from the presomitic mesoderm to somites.</title>
        <authorList>
            <person name="Kawamura A."/>
            <person name="Koshida S."/>
            <person name="Hijikata H."/>
            <person name="Ohbayashi A."/>
            <person name="Kondoh H."/>
            <person name="Takada S."/>
        </authorList>
    </citation>
    <scope>INTERACTION WITH RIPPLY1</scope>
</reference>
<reference key="4">
    <citation type="journal article" date="2014" name="Nat. Commun.">
        <title>Tissue-specific derepression of TCF/LEF controls the activity of the Wnt/beta-catenin pathway.</title>
        <authorList>
            <person name="Lu F.I."/>
            <person name="Sun Y.H."/>
            <person name="Wei C.Y."/>
            <person name="Thisse C."/>
            <person name="Thisse B."/>
        </authorList>
    </citation>
    <scope>INTERACTION WITH TCF7L1A AND LBX2</scope>
</reference>
<feature type="chain" id="PRO_0000051289" description="Transducin-like enhancer protein 3-A">
    <location>
        <begin position="1"/>
        <end position="761"/>
    </location>
</feature>
<feature type="repeat" description="WD 1">
    <location>
        <begin position="473"/>
        <end position="511"/>
    </location>
</feature>
<feature type="repeat" description="WD 2">
    <location>
        <begin position="519"/>
        <end position="558"/>
    </location>
</feature>
<feature type="repeat" description="WD 3">
    <location>
        <begin position="563"/>
        <end position="602"/>
    </location>
</feature>
<feature type="repeat" description="WD 4">
    <location>
        <begin position="605"/>
        <end position="644"/>
    </location>
</feature>
<feature type="repeat" description="WD 5">
    <location>
        <begin position="646"/>
        <end position="685"/>
    </location>
</feature>
<feature type="repeat" description="WD 6">
    <location>
        <begin position="687"/>
        <end position="726"/>
    </location>
</feature>
<feature type="repeat" description="WD 7">
    <location>
        <begin position="728"/>
        <end position="761"/>
    </location>
</feature>
<feature type="region of interest" description="Q domain" evidence="2">
    <location>
        <begin position="1"/>
        <end position="140"/>
    </location>
</feature>
<feature type="region of interest" description="Disordered" evidence="5">
    <location>
        <begin position="139"/>
        <end position="349"/>
    </location>
</feature>
<feature type="region of interest" description="GP domain" evidence="2">
    <location>
        <begin position="141"/>
        <end position="204"/>
    </location>
</feature>
<feature type="region of interest" description="CcN domain" evidence="2">
    <location>
        <begin position="205"/>
        <end position="274"/>
    </location>
</feature>
<feature type="region of interest" description="SP domain" evidence="2">
    <location>
        <begin position="275"/>
        <end position="441"/>
    </location>
</feature>
<feature type="short sequence motif" description="Nuclear localization signal" evidence="4">
    <location>
        <begin position="231"/>
        <end position="234"/>
    </location>
</feature>
<feature type="compositionally biased region" description="Low complexity" evidence="5">
    <location>
        <begin position="173"/>
        <end position="182"/>
    </location>
</feature>
<feature type="compositionally biased region" description="Basic and acidic residues" evidence="5">
    <location>
        <begin position="187"/>
        <end position="202"/>
    </location>
</feature>
<feature type="compositionally biased region" description="Polar residues" evidence="5">
    <location>
        <begin position="203"/>
        <end position="215"/>
    </location>
</feature>
<feature type="compositionally biased region" description="Basic and acidic residues" evidence="5">
    <location>
        <begin position="216"/>
        <end position="253"/>
    </location>
</feature>
<feature type="compositionally biased region" description="Basic and acidic residues" evidence="5">
    <location>
        <begin position="278"/>
        <end position="291"/>
    </location>
</feature>
<feature type="compositionally biased region" description="Low complexity" evidence="5">
    <location>
        <begin position="293"/>
        <end position="307"/>
    </location>
</feature>
<sequence length="761" mass="82460">MYPQGRHPAPQTPGQPGFKFTVAESCDRIKDEFQFLQAQYHSLKVEYIKLANEKTEMQRHYIMYYEMSYGLNIEMHKQTEIAKRLNAILAQIMPFLSQEHQQQVAQAVERAKQVTMTELNAIIGVRGLPNLPLTQQLQAQHLSHTHGPVALTPPHPSGLQPPGIPPVTGSGSGLLALGALGSQPHLPAKDEKNHHDLEHRESTNNSISPSDSLRTTSEKHRGSSDYSLDSKKRKVEDKDSMSRYDSDGDKSDDLVVDVSNEDPATPRGSPAHSPPENGIDKPRPAKKDTPRRPASVASSGSTPSSKTKPPEHNDKSSTPGLKSKAPTPRNDAPTPGTSTTPGLRPILGKPPMEALAAPALRTPLTCPTPFAMMSHHEMNGSLTNPGVYAGLHISPQMSAAAAAAYGRSPMAGFEPPHMRAPGLPASLTSISGGKPAYSFHVSADGQMQPVPFPPDALIGPGIPRHARQINTLSHGEVVCAVTISNPTRHVYTGGKGCVKIWDISQPGSKSPVSQLDCLNRDNYIRSCKLLPDGRTLIVGGEASTLTIWDLASQTPRIKAELTSSAPACYALAISPDAKVCFSCCSDGNIAVWDLHNQTLVRQFQGHTDGASCIDISHDGTKLWTGGLDNTVRSWDLREGRQLQQHDFASQIFSLGYCPTGEWLAVGMESSNVEVLHHTKPDKYQLHLHESCVLSLKFAYCGKWFVSTGKDNLLNAWSTPYGASIFQSKESSSVLSCDISADDKYIVTGSGDKKATVYEVIY</sequence>
<keyword id="KW-0539">Nucleus</keyword>
<keyword id="KW-1185">Reference proteome</keyword>
<keyword id="KW-0677">Repeat</keyword>
<keyword id="KW-0832">Ubl conjugation</keyword>
<keyword id="KW-0853">WD repeat</keyword>
<evidence type="ECO:0000250" key="1"/>
<evidence type="ECO:0000250" key="2">
    <source>
        <dbReference type="UniProtKB" id="Q04724"/>
    </source>
</evidence>
<evidence type="ECO:0000250" key="3">
    <source>
        <dbReference type="UniProtKB" id="Q04726"/>
    </source>
</evidence>
<evidence type="ECO:0000255" key="4"/>
<evidence type="ECO:0000256" key="5">
    <source>
        <dbReference type="SAM" id="MobiDB-lite"/>
    </source>
</evidence>
<evidence type="ECO:0000269" key="6">
    <source>
    </source>
</evidence>
<evidence type="ECO:0000269" key="7">
    <source>
    </source>
</evidence>
<evidence type="ECO:0000269" key="8">
    <source>
    </source>
</evidence>
<evidence type="ECO:0000269" key="9">
    <source>
    </source>
</evidence>
<evidence type="ECO:0000303" key="10">
    <source>
    </source>
</evidence>
<evidence type="ECO:0000303" key="11">
    <source>
    </source>
</evidence>
<evidence type="ECO:0000305" key="12"/>
<organism>
    <name type="scientific">Danio rerio</name>
    <name type="common">Zebrafish</name>
    <name type="synonym">Brachydanio rerio</name>
    <dbReference type="NCBI Taxonomy" id="7955"/>
    <lineage>
        <taxon>Eukaryota</taxon>
        <taxon>Metazoa</taxon>
        <taxon>Chordata</taxon>
        <taxon>Craniata</taxon>
        <taxon>Vertebrata</taxon>
        <taxon>Euteleostomi</taxon>
        <taxon>Actinopterygii</taxon>
        <taxon>Neopterygii</taxon>
        <taxon>Teleostei</taxon>
        <taxon>Ostariophysi</taxon>
        <taxon>Cypriniformes</taxon>
        <taxon>Danionidae</taxon>
        <taxon>Danioninae</taxon>
        <taxon>Danio</taxon>
    </lineage>
</organism>
<gene>
    <name evidence="12" type="primary">tle3a</name>
    <name evidence="10" type="synonym">grg2</name>
    <name evidence="11" type="synonym">gro2</name>
    <name evidence="11" type="synonym">groucho2</name>
</gene>
<accession>O13166</accession>
<name>TLE3A_DANRE</name>
<proteinExistence type="evidence at protein level"/>
<dbReference type="EMBL" id="Y12466">
    <property type="protein sequence ID" value="CAA73069.1"/>
    <property type="molecule type" value="mRNA"/>
</dbReference>
<dbReference type="EMBL" id="U96340">
    <property type="protein sequence ID" value="AAB57807.1"/>
    <property type="molecule type" value="mRNA"/>
</dbReference>
<dbReference type="SMR" id="O13166"/>
<dbReference type="FunCoup" id="O13166">
    <property type="interactions" value="328"/>
</dbReference>
<dbReference type="STRING" id="7955.ENSDARP00000045678"/>
<dbReference type="PaxDb" id="7955-ENSDARP00000045678"/>
<dbReference type="AGR" id="ZFIN:ZDB-GENE-990415-86"/>
<dbReference type="ZFIN" id="ZDB-GENE-990415-86">
    <property type="gene designation" value="tle3a"/>
</dbReference>
<dbReference type="eggNOG" id="KOG0639">
    <property type="taxonomic scope" value="Eukaryota"/>
</dbReference>
<dbReference type="InParanoid" id="O13166"/>
<dbReference type="PRO" id="PR:O13166"/>
<dbReference type="Proteomes" id="UP000000437">
    <property type="component" value="Unplaced"/>
</dbReference>
<dbReference type="GO" id="GO:0005634">
    <property type="term" value="C:nucleus"/>
    <property type="evidence" value="ECO:0000318"/>
    <property type="project" value="GO_Central"/>
</dbReference>
<dbReference type="GO" id="GO:0005667">
    <property type="term" value="C:transcription regulator complex"/>
    <property type="evidence" value="ECO:0000318"/>
    <property type="project" value="GO_Central"/>
</dbReference>
<dbReference type="GO" id="GO:0003714">
    <property type="term" value="F:transcription corepressor activity"/>
    <property type="evidence" value="ECO:0000318"/>
    <property type="project" value="GO_Central"/>
</dbReference>
<dbReference type="GO" id="GO:0090090">
    <property type="term" value="P:negative regulation of canonical Wnt signaling pathway"/>
    <property type="evidence" value="ECO:0000318"/>
    <property type="project" value="GO_Central"/>
</dbReference>
<dbReference type="GO" id="GO:1900052">
    <property type="term" value="P:regulation of retinoic acid biosynthetic process"/>
    <property type="evidence" value="ECO:0000316"/>
    <property type="project" value="ZFIN"/>
</dbReference>
<dbReference type="GO" id="GO:0061056">
    <property type="term" value="P:sclerotome development"/>
    <property type="evidence" value="ECO:0000315"/>
    <property type="project" value="ZFIN"/>
</dbReference>
<dbReference type="CDD" id="cd00200">
    <property type="entry name" value="WD40"/>
    <property type="match status" value="1"/>
</dbReference>
<dbReference type="FunFam" id="2.130.10.10:FF:000001">
    <property type="entry name" value="transducin-like enhancer protein 3 isoform X1"/>
    <property type="match status" value="1"/>
</dbReference>
<dbReference type="Gene3D" id="2.130.10.10">
    <property type="entry name" value="YVTN repeat-like/Quinoprotein amine dehydrogenase"/>
    <property type="match status" value="1"/>
</dbReference>
<dbReference type="InterPro" id="IPR005617">
    <property type="entry name" value="Groucho/TLE_N"/>
</dbReference>
<dbReference type="InterPro" id="IPR009146">
    <property type="entry name" value="Groucho_enhance"/>
</dbReference>
<dbReference type="InterPro" id="IPR015943">
    <property type="entry name" value="WD40/YVTN_repeat-like_dom_sf"/>
</dbReference>
<dbReference type="InterPro" id="IPR019775">
    <property type="entry name" value="WD40_repeat_CS"/>
</dbReference>
<dbReference type="InterPro" id="IPR036322">
    <property type="entry name" value="WD40_repeat_dom_sf"/>
</dbReference>
<dbReference type="InterPro" id="IPR001680">
    <property type="entry name" value="WD40_rpt"/>
</dbReference>
<dbReference type="PANTHER" id="PTHR10814">
    <property type="entry name" value="TRANSDUCIN-LIKE ENHANCER PROTEIN"/>
    <property type="match status" value="1"/>
</dbReference>
<dbReference type="PANTHER" id="PTHR10814:SF24">
    <property type="entry name" value="TRANSDUCIN-LIKE ENHANCER PROTEIN 3"/>
    <property type="match status" value="1"/>
</dbReference>
<dbReference type="Pfam" id="PF03920">
    <property type="entry name" value="TLE_N"/>
    <property type="match status" value="1"/>
</dbReference>
<dbReference type="Pfam" id="PF00400">
    <property type="entry name" value="WD40"/>
    <property type="match status" value="6"/>
</dbReference>
<dbReference type="PRINTS" id="PR01850">
    <property type="entry name" value="GROUCHOFAMLY"/>
</dbReference>
<dbReference type="SMART" id="SM00320">
    <property type="entry name" value="WD40"/>
    <property type="match status" value="7"/>
</dbReference>
<dbReference type="SUPFAM" id="SSF50978">
    <property type="entry name" value="WD40 repeat-like"/>
    <property type="match status" value="1"/>
</dbReference>
<dbReference type="PROSITE" id="PS00678">
    <property type="entry name" value="WD_REPEATS_1"/>
    <property type="match status" value="2"/>
</dbReference>
<dbReference type="PROSITE" id="PS50082">
    <property type="entry name" value="WD_REPEATS_2"/>
    <property type="match status" value="2"/>
</dbReference>
<dbReference type="PROSITE" id="PS50294">
    <property type="entry name" value="WD_REPEATS_REGION"/>
    <property type="match status" value="2"/>
</dbReference>